<dbReference type="EMBL" id="AAFI02000064">
    <property type="protein sequence ID" value="EAL65344.1"/>
    <property type="molecule type" value="Genomic_DNA"/>
</dbReference>
<dbReference type="RefSeq" id="XP_638656.1">
    <property type="nucleotide sequence ID" value="XM_633564.1"/>
</dbReference>
<dbReference type="FunCoup" id="Q54PY9">
    <property type="interactions" value="640"/>
</dbReference>
<dbReference type="PaxDb" id="44689-DDB0237903"/>
<dbReference type="EnsemblProtists" id="EAL65344">
    <property type="protein sequence ID" value="EAL65344"/>
    <property type="gene ID" value="DDB_G0284311"/>
</dbReference>
<dbReference type="GeneID" id="8624485"/>
<dbReference type="KEGG" id="ddi:DDB_G0284311"/>
<dbReference type="dictyBase" id="DDB_G0284311"/>
<dbReference type="VEuPathDB" id="AmoebaDB:DDB_G0284311"/>
<dbReference type="eggNOG" id="ENOG502RIH6">
    <property type="taxonomic scope" value="Eukaryota"/>
</dbReference>
<dbReference type="HOGENOM" id="CLU_931997_0_0_1"/>
<dbReference type="InParanoid" id="Q54PY9"/>
<dbReference type="PRO" id="PR:Q54PY9"/>
<dbReference type="Proteomes" id="UP000002195">
    <property type="component" value="Chromosome 4"/>
</dbReference>
<dbReference type="GO" id="GO:0004402">
    <property type="term" value="F:histone acetyltransferase activity"/>
    <property type="evidence" value="ECO:0000318"/>
    <property type="project" value="GO_Central"/>
</dbReference>
<accession>Q54PY9</accession>
<evidence type="ECO:0000256" key="1">
    <source>
        <dbReference type="SAM" id="MobiDB-lite"/>
    </source>
</evidence>
<reference key="1">
    <citation type="journal article" date="2005" name="Nature">
        <title>The genome of the social amoeba Dictyostelium discoideum.</title>
        <authorList>
            <person name="Eichinger L."/>
            <person name="Pachebat J.A."/>
            <person name="Gloeckner G."/>
            <person name="Rajandream M.A."/>
            <person name="Sucgang R."/>
            <person name="Berriman M."/>
            <person name="Song J."/>
            <person name="Olsen R."/>
            <person name="Szafranski K."/>
            <person name="Xu Q."/>
            <person name="Tunggal B."/>
            <person name="Kummerfeld S."/>
            <person name="Madera M."/>
            <person name="Konfortov B.A."/>
            <person name="Rivero F."/>
            <person name="Bankier A.T."/>
            <person name="Lehmann R."/>
            <person name="Hamlin N."/>
            <person name="Davies R."/>
            <person name="Gaudet P."/>
            <person name="Fey P."/>
            <person name="Pilcher K."/>
            <person name="Chen G."/>
            <person name="Saunders D."/>
            <person name="Sodergren E.J."/>
            <person name="Davis P."/>
            <person name="Kerhornou A."/>
            <person name="Nie X."/>
            <person name="Hall N."/>
            <person name="Anjard C."/>
            <person name="Hemphill L."/>
            <person name="Bason N."/>
            <person name="Farbrother P."/>
            <person name="Desany B."/>
            <person name="Just E."/>
            <person name="Morio T."/>
            <person name="Rost R."/>
            <person name="Churcher C.M."/>
            <person name="Cooper J."/>
            <person name="Haydock S."/>
            <person name="van Driessche N."/>
            <person name="Cronin A."/>
            <person name="Goodhead I."/>
            <person name="Muzny D.M."/>
            <person name="Mourier T."/>
            <person name="Pain A."/>
            <person name="Lu M."/>
            <person name="Harper D."/>
            <person name="Lindsay R."/>
            <person name="Hauser H."/>
            <person name="James K.D."/>
            <person name="Quiles M."/>
            <person name="Madan Babu M."/>
            <person name="Saito T."/>
            <person name="Buchrieser C."/>
            <person name="Wardroper A."/>
            <person name="Felder M."/>
            <person name="Thangavelu M."/>
            <person name="Johnson D."/>
            <person name="Knights A."/>
            <person name="Loulseged H."/>
            <person name="Mungall K.L."/>
            <person name="Oliver K."/>
            <person name="Price C."/>
            <person name="Quail M.A."/>
            <person name="Urushihara H."/>
            <person name="Hernandez J."/>
            <person name="Rabbinowitsch E."/>
            <person name="Steffen D."/>
            <person name="Sanders M."/>
            <person name="Ma J."/>
            <person name="Kohara Y."/>
            <person name="Sharp S."/>
            <person name="Simmonds M.N."/>
            <person name="Spiegler S."/>
            <person name="Tivey A."/>
            <person name="Sugano S."/>
            <person name="White B."/>
            <person name="Walker D."/>
            <person name="Woodward J.R."/>
            <person name="Winckler T."/>
            <person name="Tanaka Y."/>
            <person name="Shaulsky G."/>
            <person name="Schleicher M."/>
            <person name="Weinstock G.M."/>
            <person name="Rosenthal A."/>
            <person name="Cox E.C."/>
            <person name="Chisholm R.L."/>
            <person name="Gibbs R.A."/>
            <person name="Loomis W.F."/>
            <person name="Platzer M."/>
            <person name="Kay R.R."/>
            <person name="Williams J.G."/>
            <person name="Dear P.H."/>
            <person name="Noegel A.A."/>
            <person name="Barrell B.G."/>
            <person name="Kuspa A."/>
        </authorList>
    </citation>
    <scope>NUCLEOTIDE SEQUENCE [LARGE SCALE GENOMIC DNA]</scope>
    <source>
        <strain>AX4</strain>
    </source>
</reference>
<proteinExistence type="predicted"/>
<protein>
    <recommendedName>
        <fullName>Uncharacterized protein DDB_G0284311</fullName>
    </recommendedName>
</protein>
<sequence>MTSIIQSPPLNSKKPHLSQDDRINKNNNNNNKMIFQKRTIADNQIQSPLIGHYKLNNNNNNNNNNNNNNNNNNNNNNNNSSSNNNINNNNLVVDECCEKTEQIETKETITKVEDNLNLEVDVDKEIENEIAKYQHLLSTSTIFNGICQDYTDESDNSDEENVDDDDEEEDNKKQKEECEEEEEEECEEEEEEDSDEDSDDDDSDDSEDSDYVEESILNNCLRQQQQINHNGFMNKKYNYIDTNSYFFSRQQQQQPQKINHIYADTSLRMELIELLTVMKNNEREKGNMVEDVCVHEIFL</sequence>
<name>Y8589_DICDI</name>
<feature type="chain" id="PRO_0000350916" description="Uncharacterized protein DDB_G0284311">
    <location>
        <begin position="1"/>
        <end position="299"/>
    </location>
</feature>
<feature type="region of interest" description="Disordered" evidence="1">
    <location>
        <begin position="1"/>
        <end position="30"/>
    </location>
</feature>
<feature type="region of interest" description="Disordered" evidence="1">
    <location>
        <begin position="54"/>
        <end position="89"/>
    </location>
</feature>
<feature type="region of interest" description="Disordered" evidence="1">
    <location>
        <begin position="148"/>
        <end position="212"/>
    </location>
</feature>
<feature type="compositionally biased region" description="Polar residues" evidence="1">
    <location>
        <begin position="1"/>
        <end position="10"/>
    </location>
</feature>
<feature type="compositionally biased region" description="Low complexity" evidence="1">
    <location>
        <begin position="56"/>
        <end position="89"/>
    </location>
</feature>
<feature type="compositionally biased region" description="Acidic residues" evidence="1">
    <location>
        <begin position="150"/>
        <end position="169"/>
    </location>
</feature>
<feature type="compositionally biased region" description="Acidic residues" evidence="1">
    <location>
        <begin position="177"/>
        <end position="212"/>
    </location>
</feature>
<gene>
    <name type="ORF">DDB_G0284311</name>
</gene>
<organism>
    <name type="scientific">Dictyostelium discoideum</name>
    <name type="common">Social amoeba</name>
    <dbReference type="NCBI Taxonomy" id="44689"/>
    <lineage>
        <taxon>Eukaryota</taxon>
        <taxon>Amoebozoa</taxon>
        <taxon>Evosea</taxon>
        <taxon>Eumycetozoa</taxon>
        <taxon>Dictyostelia</taxon>
        <taxon>Dictyosteliales</taxon>
        <taxon>Dictyosteliaceae</taxon>
        <taxon>Dictyostelium</taxon>
    </lineage>
</organism>
<keyword id="KW-1185">Reference proteome</keyword>